<gene>
    <name evidence="1" type="primary">rsmA</name>
    <name evidence="1" type="synonym">ksgA</name>
    <name type="ordered locus">SPCG_1948</name>
</gene>
<proteinExistence type="inferred from homology"/>
<organism>
    <name type="scientific">Streptococcus pneumoniae (strain CGSP14)</name>
    <dbReference type="NCBI Taxonomy" id="516950"/>
    <lineage>
        <taxon>Bacteria</taxon>
        <taxon>Bacillati</taxon>
        <taxon>Bacillota</taxon>
        <taxon>Bacilli</taxon>
        <taxon>Lactobacillales</taxon>
        <taxon>Streptococcaceae</taxon>
        <taxon>Streptococcus</taxon>
    </lineage>
</organism>
<reference key="1">
    <citation type="journal article" date="2009" name="BMC Genomics">
        <title>Genome evolution driven by host adaptations results in a more virulent and antimicrobial-resistant Streptococcus pneumoniae serotype 14.</title>
        <authorList>
            <person name="Ding F."/>
            <person name="Tang P."/>
            <person name="Hsu M.-H."/>
            <person name="Cui P."/>
            <person name="Hu S."/>
            <person name="Yu J."/>
            <person name="Chiu C.-H."/>
        </authorList>
    </citation>
    <scope>NUCLEOTIDE SEQUENCE [LARGE SCALE GENOMIC DNA]</scope>
    <source>
        <strain>CGSP14</strain>
    </source>
</reference>
<evidence type="ECO:0000255" key="1">
    <source>
        <dbReference type="HAMAP-Rule" id="MF_00607"/>
    </source>
</evidence>
<accession>B2IM67</accession>
<feature type="chain" id="PRO_1000130328" description="Ribosomal RNA small subunit methyltransferase A">
    <location>
        <begin position="1"/>
        <end position="290"/>
    </location>
</feature>
<feature type="binding site" evidence="1">
    <location>
        <position position="27"/>
    </location>
    <ligand>
        <name>S-adenosyl-L-methionine</name>
        <dbReference type="ChEBI" id="CHEBI:59789"/>
    </ligand>
</feature>
<feature type="binding site" evidence="1">
    <location>
        <position position="29"/>
    </location>
    <ligand>
        <name>S-adenosyl-L-methionine</name>
        <dbReference type="ChEBI" id="CHEBI:59789"/>
    </ligand>
</feature>
<feature type="binding site" evidence="1">
    <location>
        <position position="54"/>
    </location>
    <ligand>
        <name>S-adenosyl-L-methionine</name>
        <dbReference type="ChEBI" id="CHEBI:59789"/>
    </ligand>
</feature>
<feature type="binding site" evidence="1">
    <location>
        <position position="75"/>
    </location>
    <ligand>
        <name>S-adenosyl-L-methionine</name>
        <dbReference type="ChEBI" id="CHEBI:59789"/>
    </ligand>
</feature>
<feature type="binding site" evidence="1">
    <location>
        <position position="100"/>
    </location>
    <ligand>
        <name>S-adenosyl-L-methionine</name>
        <dbReference type="ChEBI" id="CHEBI:59789"/>
    </ligand>
</feature>
<feature type="binding site" evidence="1">
    <location>
        <position position="125"/>
    </location>
    <ligand>
        <name>S-adenosyl-L-methionine</name>
        <dbReference type="ChEBI" id="CHEBI:59789"/>
    </ligand>
</feature>
<sequence length="290" mass="32251">MRIADYSVTKAVLERHGFTFKKSFGQNFLTDTNILQKIVDTAEIDDQVNVIEIGPGIGALTEFLAERAAQVMTFEIDHRLVPILADTLRDFDNVTVVNEDILKVDLAQHIQNFKNPDLPIKVVANLPYYITTPILMHLIESGIPFSEFVVMMQKEVADRISAQPNTKAYGSLSIAVQYYMTAKVAFIVPRTVFVPAPNVDSAILKMVRRPEPAVAVEDENFFFKVSKASFTHRRKTLWNNLTGYFGKTEEVKDKLTKALDQAGLSPSVRGEALSLAEFAGLADALKGQGL</sequence>
<dbReference type="EC" id="2.1.1.182" evidence="1"/>
<dbReference type="EMBL" id="CP001033">
    <property type="protein sequence ID" value="ACB91201.1"/>
    <property type="molecule type" value="Genomic_DNA"/>
</dbReference>
<dbReference type="RefSeq" id="WP_001216879.1">
    <property type="nucleotide sequence ID" value="NC_010582.1"/>
</dbReference>
<dbReference type="SMR" id="B2IM67"/>
<dbReference type="KEGG" id="spw:SPCG_1948"/>
<dbReference type="HOGENOM" id="CLU_041220_0_0_9"/>
<dbReference type="GO" id="GO:0005829">
    <property type="term" value="C:cytosol"/>
    <property type="evidence" value="ECO:0007669"/>
    <property type="project" value="TreeGrafter"/>
</dbReference>
<dbReference type="GO" id="GO:0052908">
    <property type="term" value="F:16S rRNA (adenine(1518)-N(6)/adenine(1519)-N(6))-dimethyltransferase activity"/>
    <property type="evidence" value="ECO:0007669"/>
    <property type="project" value="UniProtKB-EC"/>
</dbReference>
<dbReference type="GO" id="GO:0003723">
    <property type="term" value="F:RNA binding"/>
    <property type="evidence" value="ECO:0007669"/>
    <property type="project" value="UniProtKB-KW"/>
</dbReference>
<dbReference type="CDD" id="cd02440">
    <property type="entry name" value="AdoMet_MTases"/>
    <property type="match status" value="1"/>
</dbReference>
<dbReference type="FunFam" id="1.10.8.100:FF:000005">
    <property type="entry name" value="Ribosomal RNA small subunit methyltransferase A"/>
    <property type="match status" value="1"/>
</dbReference>
<dbReference type="FunFam" id="3.40.50.150:FF:000023">
    <property type="entry name" value="Ribosomal RNA small subunit methyltransferase A"/>
    <property type="match status" value="1"/>
</dbReference>
<dbReference type="Gene3D" id="1.10.8.100">
    <property type="entry name" value="Ribosomal RNA adenine dimethylase-like, domain 2"/>
    <property type="match status" value="1"/>
</dbReference>
<dbReference type="Gene3D" id="3.40.50.150">
    <property type="entry name" value="Vaccinia Virus protein VP39"/>
    <property type="match status" value="1"/>
</dbReference>
<dbReference type="HAMAP" id="MF_00607">
    <property type="entry name" value="16SrRNA_methyltr_A"/>
    <property type="match status" value="1"/>
</dbReference>
<dbReference type="InterPro" id="IPR001737">
    <property type="entry name" value="KsgA/Erm"/>
</dbReference>
<dbReference type="InterPro" id="IPR023165">
    <property type="entry name" value="rRNA_Ade_diMease-like_C"/>
</dbReference>
<dbReference type="InterPro" id="IPR020596">
    <property type="entry name" value="rRNA_Ade_Mease_Trfase_CS"/>
</dbReference>
<dbReference type="InterPro" id="IPR020598">
    <property type="entry name" value="rRNA_Ade_methylase_Trfase_N"/>
</dbReference>
<dbReference type="InterPro" id="IPR011530">
    <property type="entry name" value="rRNA_adenine_dimethylase"/>
</dbReference>
<dbReference type="InterPro" id="IPR029063">
    <property type="entry name" value="SAM-dependent_MTases_sf"/>
</dbReference>
<dbReference type="NCBIfam" id="TIGR00755">
    <property type="entry name" value="ksgA"/>
    <property type="match status" value="1"/>
</dbReference>
<dbReference type="PANTHER" id="PTHR11727">
    <property type="entry name" value="DIMETHYLADENOSINE TRANSFERASE"/>
    <property type="match status" value="1"/>
</dbReference>
<dbReference type="PANTHER" id="PTHR11727:SF7">
    <property type="entry name" value="DIMETHYLADENOSINE TRANSFERASE-RELATED"/>
    <property type="match status" value="1"/>
</dbReference>
<dbReference type="Pfam" id="PF00398">
    <property type="entry name" value="RrnaAD"/>
    <property type="match status" value="1"/>
</dbReference>
<dbReference type="SMART" id="SM00650">
    <property type="entry name" value="rADc"/>
    <property type="match status" value="1"/>
</dbReference>
<dbReference type="SUPFAM" id="SSF53335">
    <property type="entry name" value="S-adenosyl-L-methionine-dependent methyltransferases"/>
    <property type="match status" value="1"/>
</dbReference>
<dbReference type="PROSITE" id="PS01131">
    <property type="entry name" value="RRNA_A_DIMETH"/>
    <property type="match status" value="1"/>
</dbReference>
<dbReference type="PROSITE" id="PS51689">
    <property type="entry name" value="SAM_RNA_A_N6_MT"/>
    <property type="match status" value="1"/>
</dbReference>
<name>RSMA_STRPS</name>
<comment type="function">
    <text evidence="1">Specifically dimethylates two adjacent adenosines (A1518 and A1519) in the loop of a conserved hairpin near the 3'-end of 16S rRNA in the 30S particle. May play a critical role in biogenesis of 30S subunits.</text>
</comment>
<comment type="catalytic activity">
    <reaction evidence="1">
        <text>adenosine(1518)/adenosine(1519) in 16S rRNA + 4 S-adenosyl-L-methionine = N(6)-dimethyladenosine(1518)/N(6)-dimethyladenosine(1519) in 16S rRNA + 4 S-adenosyl-L-homocysteine + 4 H(+)</text>
        <dbReference type="Rhea" id="RHEA:19609"/>
        <dbReference type="Rhea" id="RHEA-COMP:10232"/>
        <dbReference type="Rhea" id="RHEA-COMP:10233"/>
        <dbReference type="ChEBI" id="CHEBI:15378"/>
        <dbReference type="ChEBI" id="CHEBI:57856"/>
        <dbReference type="ChEBI" id="CHEBI:59789"/>
        <dbReference type="ChEBI" id="CHEBI:74411"/>
        <dbReference type="ChEBI" id="CHEBI:74493"/>
        <dbReference type="EC" id="2.1.1.182"/>
    </reaction>
</comment>
<comment type="subcellular location">
    <subcellularLocation>
        <location evidence="1">Cytoplasm</location>
    </subcellularLocation>
</comment>
<comment type="similarity">
    <text evidence="1">Belongs to the class I-like SAM-binding methyltransferase superfamily. rRNA adenine N(6)-methyltransferase family. RsmA subfamily.</text>
</comment>
<protein>
    <recommendedName>
        <fullName evidence="1">Ribosomal RNA small subunit methyltransferase A</fullName>
        <ecNumber evidence="1">2.1.1.182</ecNumber>
    </recommendedName>
    <alternativeName>
        <fullName evidence="1">16S rRNA (adenine(1518)-N(6)/adenine(1519)-N(6))-dimethyltransferase</fullName>
    </alternativeName>
    <alternativeName>
        <fullName evidence="1">16S rRNA dimethyladenosine transferase</fullName>
    </alternativeName>
    <alternativeName>
        <fullName evidence="1">16S rRNA dimethylase</fullName>
    </alternativeName>
    <alternativeName>
        <fullName evidence="1">S-adenosylmethionine-6-N', N'-adenosyl(rRNA) dimethyltransferase</fullName>
    </alternativeName>
</protein>
<keyword id="KW-0963">Cytoplasm</keyword>
<keyword id="KW-0489">Methyltransferase</keyword>
<keyword id="KW-0694">RNA-binding</keyword>
<keyword id="KW-0698">rRNA processing</keyword>
<keyword id="KW-0949">S-adenosyl-L-methionine</keyword>
<keyword id="KW-0808">Transferase</keyword>